<evidence type="ECO:0000255" key="1">
    <source>
        <dbReference type="HAMAP-Rule" id="MF_00171"/>
    </source>
</evidence>
<evidence type="ECO:0000305" key="2"/>
<proteinExistence type="evidence at protein level"/>
<sequence length="297" mass="32620">MSLTRRPPKSPPQRPPRISGVVRLRLDIAYDGTDFAGWAAQVGQRTVAGDLDAALTTIFRTPVRLRAAGRTDAGVHASGQVAHVDVPADALPNAYPRAGHVGDPEFLPLLRRLGRFLPADVRILDITRAPAGFDARFSALRRHYVYRLSTAPYGVEPQQARYITAWPRELDLDAMTAASRDLMGLHDFAAFCRHREGATTIRDLQRLDWSRAGTLVTAHVTADAFCWSMVRSLVGALLAVGEHRRATTWCRELLTATGRSSDFAVAPAHGLTLIQVDYPPDDQLASRNLVTRDVRSG</sequence>
<accession>P9WHP9</accession>
<accession>L0TE66</accession>
<accession>O06322</accession>
<accession>P65846</accession>
<feature type="chain" id="PRO_0000057415" description="tRNA pseudouridine synthase A">
    <location>
        <begin position="1"/>
        <end position="297"/>
    </location>
</feature>
<feature type="active site" description="Nucleophile" evidence="1">
    <location>
        <position position="72"/>
    </location>
</feature>
<feature type="binding site" evidence="1">
    <location>
        <position position="144"/>
    </location>
    <ligand>
        <name>substrate</name>
    </ligand>
</feature>
<dbReference type="EC" id="5.4.99.12" evidence="1"/>
<dbReference type="EMBL" id="AL123456">
    <property type="protein sequence ID" value="CCP46277.1"/>
    <property type="status" value="ALT_INIT"/>
    <property type="molecule type" value="Genomic_DNA"/>
</dbReference>
<dbReference type="PIR" id="D70565">
    <property type="entry name" value="D70565"/>
</dbReference>
<dbReference type="RefSeq" id="NP_217972.3">
    <property type="nucleotide sequence ID" value="NC_000962.3"/>
</dbReference>
<dbReference type="RefSeq" id="WP_003418344.1">
    <property type="nucleotide sequence ID" value="NZ_NVQJ01000065.1"/>
</dbReference>
<dbReference type="RefSeq" id="WP_003904329.1">
    <property type="nucleotide sequence ID" value="NC_000962.3"/>
</dbReference>
<dbReference type="SMR" id="P9WHP9"/>
<dbReference type="FunCoup" id="P9WHP9">
    <property type="interactions" value="374"/>
</dbReference>
<dbReference type="STRING" id="83332.Rv3455c"/>
<dbReference type="PaxDb" id="83332-Rv3455c"/>
<dbReference type="DNASU" id="887590"/>
<dbReference type="GeneID" id="45427444"/>
<dbReference type="GeneID" id="887590"/>
<dbReference type="KEGG" id="mtu:Rv3455c"/>
<dbReference type="TubercuList" id="Rv3455c"/>
<dbReference type="eggNOG" id="COG0101">
    <property type="taxonomic scope" value="Bacteria"/>
</dbReference>
<dbReference type="InParanoid" id="P9WHP9"/>
<dbReference type="OrthoDB" id="9811823at2"/>
<dbReference type="PhylomeDB" id="P9WHP9"/>
<dbReference type="Proteomes" id="UP000001584">
    <property type="component" value="Chromosome"/>
</dbReference>
<dbReference type="GO" id="GO:0009274">
    <property type="term" value="C:peptidoglycan-based cell wall"/>
    <property type="evidence" value="ECO:0007005"/>
    <property type="project" value="MTBBASE"/>
</dbReference>
<dbReference type="GO" id="GO:0009982">
    <property type="term" value="F:pseudouridine synthase activity"/>
    <property type="evidence" value="ECO:0000318"/>
    <property type="project" value="GO_Central"/>
</dbReference>
<dbReference type="GO" id="GO:0003723">
    <property type="term" value="F:RNA binding"/>
    <property type="evidence" value="ECO:0007669"/>
    <property type="project" value="InterPro"/>
</dbReference>
<dbReference type="GO" id="GO:0160147">
    <property type="term" value="F:tRNA pseudouridine(38-40) synthase activity"/>
    <property type="evidence" value="ECO:0007669"/>
    <property type="project" value="UniProtKB-EC"/>
</dbReference>
<dbReference type="GO" id="GO:0031119">
    <property type="term" value="P:tRNA pseudouridine synthesis"/>
    <property type="evidence" value="ECO:0000318"/>
    <property type="project" value="GO_Central"/>
</dbReference>
<dbReference type="CDD" id="cd02570">
    <property type="entry name" value="PseudoU_synth_EcTruA"/>
    <property type="match status" value="1"/>
</dbReference>
<dbReference type="FunFam" id="3.30.70.580:FF:000008">
    <property type="entry name" value="tRNA pseudouridine synthase A"/>
    <property type="match status" value="1"/>
</dbReference>
<dbReference type="FunFam" id="3.30.70.660:FF:000003">
    <property type="entry name" value="tRNA pseudouridine synthase A"/>
    <property type="match status" value="1"/>
</dbReference>
<dbReference type="Gene3D" id="3.30.70.660">
    <property type="entry name" value="Pseudouridine synthase I, catalytic domain, C-terminal subdomain"/>
    <property type="match status" value="1"/>
</dbReference>
<dbReference type="Gene3D" id="3.30.70.580">
    <property type="entry name" value="Pseudouridine synthase I, catalytic domain, N-terminal subdomain"/>
    <property type="match status" value="1"/>
</dbReference>
<dbReference type="HAMAP" id="MF_00171">
    <property type="entry name" value="TruA"/>
    <property type="match status" value="1"/>
</dbReference>
<dbReference type="InterPro" id="IPR020103">
    <property type="entry name" value="PsdUridine_synth_cat_dom_sf"/>
</dbReference>
<dbReference type="InterPro" id="IPR001406">
    <property type="entry name" value="PsdUridine_synth_TruA"/>
</dbReference>
<dbReference type="InterPro" id="IPR020097">
    <property type="entry name" value="PsdUridine_synth_TruA_a/b_dom"/>
</dbReference>
<dbReference type="InterPro" id="IPR020095">
    <property type="entry name" value="PsdUridine_synth_TruA_C"/>
</dbReference>
<dbReference type="InterPro" id="IPR020094">
    <property type="entry name" value="TruA/RsuA/RluB/E/F_N"/>
</dbReference>
<dbReference type="NCBIfam" id="TIGR00071">
    <property type="entry name" value="hisT_truA"/>
    <property type="match status" value="1"/>
</dbReference>
<dbReference type="PANTHER" id="PTHR11142">
    <property type="entry name" value="PSEUDOURIDYLATE SYNTHASE"/>
    <property type="match status" value="1"/>
</dbReference>
<dbReference type="PANTHER" id="PTHR11142:SF0">
    <property type="entry name" value="TRNA PSEUDOURIDINE SYNTHASE-LIKE 1"/>
    <property type="match status" value="1"/>
</dbReference>
<dbReference type="Pfam" id="PF01416">
    <property type="entry name" value="PseudoU_synth_1"/>
    <property type="match status" value="1"/>
</dbReference>
<dbReference type="PIRSF" id="PIRSF001430">
    <property type="entry name" value="tRNA_psdUrid_synth"/>
    <property type="match status" value="1"/>
</dbReference>
<dbReference type="SUPFAM" id="SSF55120">
    <property type="entry name" value="Pseudouridine synthase"/>
    <property type="match status" value="1"/>
</dbReference>
<protein>
    <recommendedName>
        <fullName evidence="1">tRNA pseudouridine synthase A</fullName>
        <ecNumber evidence="1">5.4.99.12</ecNumber>
    </recommendedName>
    <alternativeName>
        <fullName evidence="1">tRNA pseudouridine(38-40) synthase</fullName>
    </alternativeName>
    <alternativeName>
        <fullName evidence="1">tRNA pseudouridylate synthase I</fullName>
    </alternativeName>
    <alternativeName>
        <fullName evidence="1">tRNA-uridine isomerase I</fullName>
    </alternativeName>
</protein>
<name>TRUA_MYCTU</name>
<keyword id="KW-0413">Isomerase</keyword>
<keyword id="KW-1185">Reference proteome</keyword>
<keyword id="KW-0819">tRNA processing</keyword>
<organism>
    <name type="scientific">Mycobacterium tuberculosis (strain ATCC 25618 / H37Rv)</name>
    <dbReference type="NCBI Taxonomy" id="83332"/>
    <lineage>
        <taxon>Bacteria</taxon>
        <taxon>Bacillati</taxon>
        <taxon>Actinomycetota</taxon>
        <taxon>Actinomycetes</taxon>
        <taxon>Mycobacteriales</taxon>
        <taxon>Mycobacteriaceae</taxon>
        <taxon>Mycobacterium</taxon>
        <taxon>Mycobacterium tuberculosis complex</taxon>
    </lineage>
</organism>
<reference key="1">
    <citation type="journal article" date="1998" name="Nature">
        <title>Deciphering the biology of Mycobacterium tuberculosis from the complete genome sequence.</title>
        <authorList>
            <person name="Cole S.T."/>
            <person name="Brosch R."/>
            <person name="Parkhill J."/>
            <person name="Garnier T."/>
            <person name="Churcher C.M."/>
            <person name="Harris D.E."/>
            <person name="Gordon S.V."/>
            <person name="Eiglmeier K."/>
            <person name="Gas S."/>
            <person name="Barry C.E. III"/>
            <person name="Tekaia F."/>
            <person name="Badcock K."/>
            <person name="Basham D."/>
            <person name="Brown D."/>
            <person name="Chillingworth T."/>
            <person name="Connor R."/>
            <person name="Davies R.M."/>
            <person name="Devlin K."/>
            <person name="Feltwell T."/>
            <person name="Gentles S."/>
            <person name="Hamlin N."/>
            <person name="Holroyd S."/>
            <person name="Hornsby T."/>
            <person name="Jagels K."/>
            <person name="Krogh A."/>
            <person name="McLean J."/>
            <person name="Moule S."/>
            <person name="Murphy L.D."/>
            <person name="Oliver S."/>
            <person name="Osborne J."/>
            <person name="Quail M.A."/>
            <person name="Rajandream M.A."/>
            <person name="Rogers J."/>
            <person name="Rutter S."/>
            <person name="Seeger K."/>
            <person name="Skelton S."/>
            <person name="Squares S."/>
            <person name="Squares R."/>
            <person name="Sulston J.E."/>
            <person name="Taylor K."/>
            <person name="Whitehead S."/>
            <person name="Barrell B.G."/>
        </authorList>
    </citation>
    <scope>NUCLEOTIDE SEQUENCE [LARGE SCALE GENOMIC DNA]</scope>
    <source>
        <strain>ATCC 25618 / H37Rv</strain>
    </source>
</reference>
<reference key="2">
    <citation type="journal article" date="2011" name="Mol. Cell. Proteomics">
        <title>Proteogenomic analysis of Mycobacterium tuberculosis by high resolution mass spectrometry.</title>
        <authorList>
            <person name="Kelkar D.S."/>
            <person name="Kumar D."/>
            <person name="Kumar P."/>
            <person name="Balakrishnan L."/>
            <person name="Muthusamy B."/>
            <person name="Yadav A.K."/>
            <person name="Shrivastava P."/>
            <person name="Marimuthu A."/>
            <person name="Anand S."/>
            <person name="Sundaram H."/>
            <person name="Kingsbury R."/>
            <person name="Harsha H.C."/>
            <person name="Nair B."/>
            <person name="Prasad T.S."/>
            <person name="Chauhan D.S."/>
            <person name="Katoch K."/>
            <person name="Katoch V.M."/>
            <person name="Kumar P."/>
            <person name="Chaerkady R."/>
            <person name="Ramachandran S."/>
            <person name="Dash D."/>
            <person name="Pandey A."/>
        </authorList>
    </citation>
    <scope>IDENTIFICATION BY MASS SPECTROMETRY [LARGE SCALE ANALYSIS]</scope>
    <source>
        <strain>ATCC 25618 / H37Rv</strain>
    </source>
</reference>
<comment type="function">
    <text evidence="1">Formation of pseudouridine at positions 38, 39 and 40 in the anticodon stem and loop of transfer RNAs.</text>
</comment>
<comment type="catalytic activity">
    <reaction evidence="1">
        <text>uridine(38/39/40) in tRNA = pseudouridine(38/39/40) in tRNA</text>
        <dbReference type="Rhea" id="RHEA:22376"/>
        <dbReference type="Rhea" id="RHEA-COMP:10085"/>
        <dbReference type="Rhea" id="RHEA-COMP:10087"/>
        <dbReference type="ChEBI" id="CHEBI:65314"/>
        <dbReference type="ChEBI" id="CHEBI:65315"/>
        <dbReference type="EC" id="5.4.99.12"/>
    </reaction>
</comment>
<comment type="subunit">
    <text evidence="1">Homodimer.</text>
</comment>
<comment type="similarity">
    <text evidence="1">Belongs to the tRNA pseudouridine synthase TruA family.</text>
</comment>
<comment type="sequence caution" evidence="2">
    <conflict type="erroneous initiation">
        <sequence resource="EMBL-CDS" id="CCP46277"/>
    </conflict>
    <text>Truncated N-terminus.</text>
</comment>
<gene>
    <name evidence="1" type="primary">truA</name>
    <name type="ordered locus">Rv3455c</name>
    <name type="ORF">MTCY13E12.08c</name>
</gene>